<organism>
    <name type="scientific">Burkholderia orbicola (strain MC0-3)</name>
    <dbReference type="NCBI Taxonomy" id="406425"/>
    <lineage>
        <taxon>Bacteria</taxon>
        <taxon>Pseudomonadati</taxon>
        <taxon>Pseudomonadota</taxon>
        <taxon>Betaproteobacteria</taxon>
        <taxon>Burkholderiales</taxon>
        <taxon>Burkholderiaceae</taxon>
        <taxon>Burkholderia</taxon>
        <taxon>Burkholderia cepacia complex</taxon>
        <taxon>Burkholderia orbicola</taxon>
    </lineage>
</organism>
<feature type="chain" id="PRO_1000122688" description="Acyl-[acyl-carrier-protein]--UDP-N-acetylglucosamine O-acyltransferase">
    <location>
        <begin position="1"/>
        <end position="262"/>
    </location>
</feature>
<accession>B1JUD8</accession>
<evidence type="ECO:0000255" key="1">
    <source>
        <dbReference type="HAMAP-Rule" id="MF_00387"/>
    </source>
</evidence>
<dbReference type="EC" id="2.3.1.129" evidence="1"/>
<dbReference type="EMBL" id="CP000958">
    <property type="protein sequence ID" value="ACA91188.1"/>
    <property type="molecule type" value="Genomic_DNA"/>
</dbReference>
<dbReference type="RefSeq" id="WP_006478502.1">
    <property type="nucleotide sequence ID" value="NC_010508.1"/>
</dbReference>
<dbReference type="SMR" id="B1JUD8"/>
<dbReference type="GeneID" id="83048804"/>
<dbReference type="KEGG" id="bcm:Bcenmc03_2027"/>
<dbReference type="HOGENOM" id="CLU_061249_0_0_4"/>
<dbReference type="UniPathway" id="UPA00359">
    <property type="reaction ID" value="UER00477"/>
</dbReference>
<dbReference type="Proteomes" id="UP000002169">
    <property type="component" value="Chromosome 1"/>
</dbReference>
<dbReference type="GO" id="GO:0005737">
    <property type="term" value="C:cytoplasm"/>
    <property type="evidence" value="ECO:0007669"/>
    <property type="project" value="UniProtKB-SubCell"/>
</dbReference>
<dbReference type="GO" id="GO:0016020">
    <property type="term" value="C:membrane"/>
    <property type="evidence" value="ECO:0007669"/>
    <property type="project" value="GOC"/>
</dbReference>
<dbReference type="GO" id="GO:0008780">
    <property type="term" value="F:acyl-[acyl-carrier-protein]-UDP-N-acetylglucosamine O-acyltransferase activity"/>
    <property type="evidence" value="ECO:0007669"/>
    <property type="project" value="UniProtKB-UniRule"/>
</dbReference>
<dbReference type="GO" id="GO:0009245">
    <property type="term" value="P:lipid A biosynthetic process"/>
    <property type="evidence" value="ECO:0007669"/>
    <property type="project" value="UniProtKB-UniRule"/>
</dbReference>
<dbReference type="CDD" id="cd03351">
    <property type="entry name" value="LbH_UDP-GlcNAc_AT"/>
    <property type="match status" value="1"/>
</dbReference>
<dbReference type="Gene3D" id="2.160.10.10">
    <property type="entry name" value="Hexapeptide repeat proteins"/>
    <property type="match status" value="1"/>
</dbReference>
<dbReference type="Gene3D" id="1.20.1180.10">
    <property type="entry name" value="Udp N-acetylglucosamine O-acyltransferase, C-terminal domain"/>
    <property type="match status" value="1"/>
</dbReference>
<dbReference type="HAMAP" id="MF_00387">
    <property type="entry name" value="LpxA"/>
    <property type="match status" value="1"/>
</dbReference>
<dbReference type="InterPro" id="IPR029098">
    <property type="entry name" value="Acetyltransf_C"/>
</dbReference>
<dbReference type="InterPro" id="IPR037157">
    <property type="entry name" value="Acetyltransf_C_sf"/>
</dbReference>
<dbReference type="InterPro" id="IPR001451">
    <property type="entry name" value="Hexapep"/>
</dbReference>
<dbReference type="InterPro" id="IPR010137">
    <property type="entry name" value="Lipid_A_LpxA"/>
</dbReference>
<dbReference type="InterPro" id="IPR011004">
    <property type="entry name" value="Trimer_LpxA-like_sf"/>
</dbReference>
<dbReference type="NCBIfam" id="TIGR01852">
    <property type="entry name" value="lipid_A_lpxA"/>
    <property type="match status" value="1"/>
</dbReference>
<dbReference type="NCBIfam" id="NF003657">
    <property type="entry name" value="PRK05289.1"/>
    <property type="match status" value="1"/>
</dbReference>
<dbReference type="PANTHER" id="PTHR43480">
    <property type="entry name" value="ACYL-[ACYL-CARRIER-PROTEIN]--UDP-N-ACETYLGLUCOSAMINE O-ACYLTRANSFERASE"/>
    <property type="match status" value="1"/>
</dbReference>
<dbReference type="PANTHER" id="PTHR43480:SF1">
    <property type="entry name" value="ACYL-[ACYL-CARRIER-PROTEIN]--UDP-N-ACETYLGLUCOSAMINE O-ACYLTRANSFERASE, MITOCHONDRIAL-RELATED"/>
    <property type="match status" value="1"/>
</dbReference>
<dbReference type="Pfam" id="PF13720">
    <property type="entry name" value="Acetyltransf_11"/>
    <property type="match status" value="1"/>
</dbReference>
<dbReference type="Pfam" id="PF00132">
    <property type="entry name" value="Hexapep"/>
    <property type="match status" value="2"/>
</dbReference>
<dbReference type="PIRSF" id="PIRSF000456">
    <property type="entry name" value="UDP-GlcNAc_acltr"/>
    <property type="match status" value="1"/>
</dbReference>
<dbReference type="SUPFAM" id="SSF51161">
    <property type="entry name" value="Trimeric LpxA-like enzymes"/>
    <property type="match status" value="1"/>
</dbReference>
<dbReference type="PROSITE" id="PS00101">
    <property type="entry name" value="HEXAPEP_TRANSFERASES"/>
    <property type="match status" value="1"/>
</dbReference>
<reference key="1">
    <citation type="submission" date="2008-02" db="EMBL/GenBank/DDBJ databases">
        <title>Complete sequence of chromosome 1 of Burkholderia cenocepacia MC0-3.</title>
        <authorList>
            <person name="Copeland A."/>
            <person name="Lucas S."/>
            <person name="Lapidus A."/>
            <person name="Barry K."/>
            <person name="Bruce D."/>
            <person name="Goodwin L."/>
            <person name="Glavina del Rio T."/>
            <person name="Dalin E."/>
            <person name="Tice H."/>
            <person name="Pitluck S."/>
            <person name="Chain P."/>
            <person name="Malfatti S."/>
            <person name="Shin M."/>
            <person name="Vergez L."/>
            <person name="Schmutz J."/>
            <person name="Larimer F."/>
            <person name="Land M."/>
            <person name="Hauser L."/>
            <person name="Kyrpides N."/>
            <person name="Mikhailova N."/>
            <person name="Tiedje J."/>
            <person name="Richardson P."/>
        </authorList>
    </citation>
    <scope>NUCLEOTIDE SEQUENCE [LARGE SCALE GENOMIC DNA]</scope>
    <source>
        <strain>MC0-3</strain>
    </source>
</reference>
<protein>
    <recommendedName>
        <fullName evidence="1">Acyl-[acyl-carrier-protein]--UDP-N-acetylglucosamine O-acyltransferase</fullName>
        <shortName evidence="1">UDP-N-acetylglucosamine acyltransferase</shortName>
        <ecNumber evidence="1">2.3.1.129</ecNumber>
    </recommendedName>
</protein>
<name>LPXA_BURO0</name>
<comment type="function">
    <text evidence="1">Involved in the biosynthesis of lipid A, a phosphorylated glycolipid that anchors the lipopolysaccharide to the outer membrane of the cell.</text>
</comment>
<comment type="catalytic activity">
    <reaction evidence="1">
        <text>a (3R)-hydroxyacyl-[ACP] + UDP-N-acetyl-alpha-D-glucosamine = a UDP-3-O-[(3R)-3-hydroxyacyl]-N-acetyl-alpha-D-glucosamine + holo-[ACP]</text>
        <dbReference type="Rhea" id="RHEA:67812"/>
        <dbReference type="Rhea" id="RHEA-COMP:9685"/>
        <dbReference type="Rhea" id="RHEA-COMP:9945"/>
        <dbReference type="ChEBI" id="CHEBI:57705"/>
        <dbReference type="ChEBI" id="CHEBI:64479"/>
        <dbReference type="ChEBI" id="CHEBI:78827"/>
        <dbReference type="ChEBI" id="CHEBI:173225"/>
        <dbReference type="EC" id="2.3.1.129"/>
    </reaction>
</comment>
<comment type="pathway">
    <text evidence="1">Glycolipid biosynthesis; lipid IV(A) biosynthesis; lipid IV(A) from (3R)-3-hydroxytetradecanoyl-[acyl-carrier-protein] and UDP-N-acetyl-alpha-D-glucosamine: step 1/6.</text>
</comment>
<comment type="subunit">
    <text evidence="1">Homotrimer.</text>
</comment>
<comment type="subcellular location">
    <subcellularLocation>
        <location evidence="1">Cytoplasm</location>
    </subcellularLocation>
</comment>
<comment type="similarity">
    <text evidence="1">Belongs to the transferase hexapeptide repeat family. LpxA subfamily.</text>
</comment>
<sequence length="262" mass="27858">MTRIHPTAIVEPGAQIDESVEIGPYAIVGPHVTIGARTTIGSHSVIEGHTTLGEDNRIGHYASVGGRPQDMKYKDEPTKLVIGNRNTIREFTTIHTGTVQDVGVTTLGDDNWIMAYVHIGHDCRVGNNVILSSNAQMAGHVEIGDFAIIGGMSGVHQFVRIGAHSMLGGASALVQDIPPFVIAAGNKAEPHGINVEGLRRRGFSADAISALRSAYRVLYKNGLSLEEAKVQLRELAEAGGDGDAPVTALVEFIDASQRGIIR</sequence>
<keyword id="KW-0012">Acyltransferase</keyword>
<keyword id="KW-0963">Cytoplasm</keyword>
<keyword id="KW-0441">Lipid A biosynthesis</keyword>
<keyword id="KW-0444">Lipid biosynthesis</keyword>
<keyword id="KW-0443">Lipid metabolism</keyword>
<keyword id="KW-0677">Repeat</keyword>
<keyword id="KW-0808">Transferase</keyword>
<proteinExistence type="inferred from homology"/>
<gene>
    <name evidence="1" type="primary">lpxA</name>
    <name type="ordered locus">Bcenmc03_2027</name>
</gene>